<gene>
    <name type="primary">tcl-2</name>
    <name type="ORF">Y38C1AA.4</name>
</gene>
<protein>
    <recommendedName>
        <fullName>T-cell defective protein 2</fullName>
    </recommendedName>
</protein>
<comment type="function">
    <text evidence="3">May act synergistically with the Wnt pathways to control T-cell fate specification, gonad development, and P12 cell fate specification. Required for the distribution of pop-1 and tlp-1 proteins.</text>
</comment>
<comment type="subcellular location">
    <subcellularLocation>
        <location evidence="3">Nucleus</location>
    </subcellularLocation>
    <subcellularLocation>
        <location evidence="3">Cytoplasm</location>
    </subcellularLocation>
    <text>Cytoplasmic in neurons and nuclear in T-cells.</text>
</comment>
<comment type="tissue specificity">
    <text evidence="3">Strongly expressed in the cytoplasm of the pharynx muscle cells and several head neurons, probably the IL1s or IL2s, throughout development. Also expressed in some other unidentified neurons in the tail region. Weakly expressed in the nuclei of the T-cells and the T-cell daughters. Not expressed in gonads and in P12 cell.</text>
</comment>
<accession>Q9N428</accession>
<reference key="1">
    <citation type="journal article" date="2003" name="Dev. Biol.">
        <title>tcl-2 encodes a novel protein that acts synergistically with Wnt signaling pathways in C. elegans.</title>
        <authorList>
            <person name="Zhao X."/>
            <person name="Sawa H."/>
            <person name="Herman M.A."/>
        </authorList>
    </citation>
    <scope>NUCLEOTIDE SEQUENCE [MRNA]</scope>
    <scope>FUNCTION</scope>
    <scope>SUBCELLULAR LOCATION</scope>
    <scope>TISSUE SPECIFICITY</scope>
</reference>
<reference key="2">
    <citation type="journal article" date="1998" name="Science">
        <title>Genome sequence of the nematode C. elegans: a platform for investigating biology.</title>
        <authorList>
            <consortium name="The C. elegans sequencing consortium"/>
        </authorList>
    </citation>
    <scope>NUCLEOTIDE SEQUENCE [LARGE SCALE GENOMIC DNA]</scope>
    <source>
        <strain>Bristol N2</strain>
    </source>
</reference>
<organism>
    <name type="scientific">Caenorhabditis elegans</name>
    <dbReference type="NCBI Taxonomy" id="6239"/>
    <lineage>
        <taxon>Eukaryota</taxon>
        <taxon>Metazoa</taxon>
        <taxon>Ecdysozoa</taxon>
        <taxon>Nematoda</taxon>
        <taxon>Chromadorea</taxon>
        <taxon>Rhabditida</taxon>
        <taxon>Rhabditina</taxon>
        <taxon>Rhabditomorpha</taxon>
        <taxon>Rhabditoidea</taxon>
        <taxon>Rhabditidae</taxon>
        <taxon>Peloderinae</taxon>
        <taxon>Caenorhabditis</taxon>
    </lineage>
</organism>
<feature type="chain" id="PRO_0000072450" description="T-cell defective protein 2">
    <location>
        <begin position="1"/>
        <end position="435"/>
    </location>
</feature>
<feature type="region of interest" description="Disordered" evidence="2">
    <location>
        <begin position="65"/>
        <end position="146"/>
    </location>
</feature>
<feature type="region of interest" description="Disordered" evidence="2">
    <location>
        <begin position="393"/>
        <end position="419"/>
    </location>
</feature>
<feature type="coiled-coil region" evidence="1">
    <location>
        <begin position="322"/>
        <end position="352"/>
    </location>
</feature>
<name>TCL2_CAEEL</name>
<keyword id="KW-0175">Coiled coil</keyword>
<keyword id="KW-0963">Cytoplasm</keyword>
<keyword id="KW-0539">Nucleus</keyword>
<keyword id="KW-1185">Reference proteome</keyword>
<keyword id="KW-0879">Wnt signaling pathway</keyword>
<sequence length="435" mass="48289">MFSPDTNSEFYDDFYTKYNTNMAPTTSTFNAQPRLSLDSGLGLTNDSFYSTDLNETHLMDISAGNASTSFQSQPPPQLESSPPTKWARIRTPPNRKKKISHEGPNQEALPPGFNLFSPPSRKKIKTAFSSPPPKSMKTPDSLRKSIRISSPSPFKVTFSKTPLKLSNNENVTGIHIGRSGTYYNKQVTGSASKRCLLPSKPDGFTFLGSPGNSDVLDFPLQTTFEGFGDLDTPAKINAALEVNNDDSMDYYQYAGMIETSSSLATYTNSTGPLVENHARNLKSVPISRTASRNLMKISRKSVEEPVPEPQAVHVEPVIEKPTKISAKKEKEQKKSAAKEAALKEAKEKEMRIWKLAPFETPKKEVPLYSGRWLVISTGRTLAQQELFSDAKSFFKANPPPAPRAPQAPELASGPRRIPTIQRVTLFKHRYRSPRD</sequence>
<evidence type="ECO:0000255" key="1"/>
<evidence type="ECO:0000256" key="2">
    <source>
        <dbReference type="SAM" id="MobiDB-lite"/>
    </source>
</evidence>
<evidence type="ECO:0000269" key="3">
    <source>
    </source>
</evidence>
<proteinExistence type="evidence at transcript level"/>
<dbReference type="EMBL" id="AY145133">
    <property type="protein sequence ID" value="AAN52916.1"/>
    <property type="molecule type" value="mRNA"/>
</dbReference>
<dbReference type="EMBL" id="FO081257">
    <property type="protein sequence ID" value="CCD70248.1"/>
    <property type="molecule type" value="Genomic_DNA"/>
</dbReference>
<dbReference type="RefSeq" id="NP_499875.2">
    <property type="nucleotide sequence ID" value="NM_067474.5"/>
</dbReference>
<dbReference type="SMR" id="Q9N428"/>
<dbReference type="BioGRID" id="41995">
    <property type="interactions" value="1"/>
</dbReference>
<dbReference type="DIP" id="DIP-26644N"/>
<dbReference type="FunCoup" id="Q9N428">
    <property type="interactions" value="1353"/>
</dbReference>
<dbReference type="IntAct" id="Q9N428">
    <property type="interactions" value="1"/>
</dbReference>
<dbReference type="STRING" id="6239.Y38C1AA.4a.1"/>
<dbReference type="PaxDb" id="6239-Y38C1AA.4a"/>
<dbReference type="EnsemblMetazoa" id="Y38C1AA.4a.1">
    <property type="protein sequence ID" value="Y38C1AA.4a.1"/>
    <property type="gene ID" value="WBGene00006561"/>
</dbReference>
<dbReference type="GeneID" id="176832"/>
<dbReference type="KEGG" id="cel:CELE_Y38C1AA.4"/>
<dbReference type="UCSC" id="Y38C1AA.4">
    <property type="organism name" value="c. elegans"/>
</dbReference>
<dbReference type="AGR" id="WB:WBGene00006561"/>
<dbReference type="CTD" id="176832"/>
<dbReference type="WormBase" id="Y38C1AA.4a">
    <property type="protein sequence ID" value="CE31644"/>
    <property type="gene ID" value="WBGene00006561"/>
    <property type="gene designation" value="tcl-2"/>
</dbReference>
<dbReference type="eggNOG" id="ENOG502TG4Y">
    <property type="taxonomic scope" value="Eukaryota"/>
</dbReference>
<dbReference type="InParanoid" id="Q9N428"/>
<dbReference type="OMA" id="WLVISTG"/>
<dbReference type="OrthoDB" id="5803521at2759"/>
<dbReference type="PRO" id="PR:Q9N428"/>
<dbReference type="Proteomes" id="UP000001940">
    <property type="component" value="Chromosome IV"/>
</dbReference>
<dbReference type="Bgee" id="WBGene00006561">
    <property type="expression patterns" value="Expressed in pharyngeal muscle cell (C elegans) and 4 other cell types or tissues"/>
</dbReference>
<dbReference type="ExpressionAtlas" id="Q9N428">
    <property type="expression patterns" value="baseline and differential"/>
</dbReference>
<dbReference type="GO" id="GO:0005737">
    <property type="term" value="C:cytoplasm"/>
    <property type="evidence" value="ECO:0000314"/>
    <property type="project" value="WormBase"/>
</dbReference>
<dbReference type="GO" id="GO:0005634">
    <property type="term" value="C:nucleus"/>
    <property type="evidence" value="ECO:0000314"/>
    <property type="project" value="WormBase"/>
</dbReference>
<dbReference type="GO" id="GO:0008356">
    <property type="term" value="P:asymmetric cell division"/>
    <property type="evidence" value="ECO:0000315"/>
    <property type="project" value="WormBase"/>
</dbReference>
<dbReference type="GO" id="GO:0016055">
    <property type="term" value="P:Wnt signaling pathway"/>
    <property type="evidence" value="ECO:0007669"/>
    <property type="project" value="UniProtKB-KW"/>
</dbReference>